<accession>Q2NQM5</accession>
<reference key="1">
    <citation type="journal article" date="2006" name="Genome Res.">
        <title>Massive genome erosion and functional adaptations provide insights into the symbiotic lifestyle of Sodalis glossinidius in the tsetse host.</title>
        <authorList>
            <person name="Toh H."/>
            <person name="Weiss B.L."/>
            <person name="Perkin S.A.H."/>
            <person name="Yamashita A."/>
            <person name="Oshima K."/>
            <person name="Hattori M."/>
            <person name="Aksoy S."/>
        </authorList>
    </citation>
    <scope>NUCLEOTIDE SEQUENCE [LARGE SCALE GENOMIC DNA]</scope>
    <source>
        <strain>morsitans</strain>
    </source>
</reference>
<protein>
    <recommendedName>
        <fullName evidence="1">Large ribosomal subunit protein uL2</fullName>
    </recommendedName>
    <alternativeName>
        <fullName evidence="3">50S ribosomal protein L2</fullName>
    </alternativeName>
</protein>
<dbReference type="EMBL" id="AP008232">
    <property type="protein sequence ID" value="BAE75550.1"/>
    <property type="molecule type" value="Genomic_DNA"/>
</dbReference>
<dbReference type="RefSeq" id="WP_011412085.1">
    <property type="nucleotide sequence ID" value="NC_007712.1"/>
</dbReference>
<dbReference type="SMR" id="Q2NQM5"/>
<dbReference type="STRING" id="343509.SG2275"/>
<dbReference type="KEGG" id="sgl:SG2275"/>
<dbReference type="eggNOG" id="COG0090">
    <property type="taxonomic scope" value="Bacteria"/>
</dbReference>
<dbReference type="HOGENOM" id="CLU_036235_2_1_6"/>
<dbReference type="OrthoDB" id="9778722at2"/>
<dbReference type="BioCyc" id="SGLO343509:SGP1_RS20825-MONOMER"/>
<dbReference type="Proteomes" id="UP000001932">
    <property type="component" value="Chromosome"/>
</dbReference>
<dbReference type="GO" id="GO:0015934">
    <property type="term" value="C:large ribosomal subunit"/>
    <property type="evidence" value="ECO:0007669"/>
    <property type="project" value="InterPro"/>
</dbReference>
<dbReference type="GO" id="GO:0019843">
    <property type="term" value="F:rRNA binding"/>
    <property type="evidence" value="ECO:0007669"/>
    <property type="project" value="UniProtKB-UniRule"/>
</dbReference>
<dbReference type="GO" id="GO:0003735">
    <property type="term" value="F:structural constituent of ribosome"/>
    <property type="evidence" value="ECO:0007669"/>
    <property type="project" value="InterPro"/>
</dbReference>
<dbReference type="GO" id="GO:0016740">
    <property type="term" value="F:transferase activity"/>
    <property type="evidence" value="ECO:0007669"/>
    <property type="project" value="InterPro"/>
</dbReference>
<dbReference type="GO" id="GO:0002181">
    <property type="term" value="P:cytoplasmic translation"/>
    <property type="evidence" value="ECO:0007669"/>
    <property type="project" value="TreeGrafter"/>
</dbReference>
<dbReference type="FunFam" id="2.30.30.30:FF:000001">
    <property type="entry name" value="50S ribosomal protein L2"/>
    <property type="match status" value="1"/>
</dbReference>
<dbReference type="FunFam" id="2.40.50.140:FF:000003">
    <property type="entry name" value="50S ribosomal protein L2"/>
    <property type="match status" value="1"/>
</dbReference>
<dbReference type="FunFam" id="4.10.950.10:FF:000001">
    <property type="entry name" value="50S ribosomal protein L2"/>
    <property type="match status" value="1"/>
</dbReference>
<dbReference type="Gene3D" id="2.30.30.30">
    <property type="match status" value="1"/>
</dbReference>
<dbReference type="Gene3D" id="2.40.50.140">
    <property type="entry name" value="Nucleic acid-binding proteins"/>
    <property type="match status" value="1"/>
</dbReference>
<dbReference type="Gene3D" id="4.10.950.10">
    <property type="entry name" value="Ribosomal protein L2, domain 3"/>
    <property type="match status" value="1"/>
</dbReference>
<dbReference type="HAMAP" id="MF_01320_B">
    <property type="entry name" value="Ribosomal_uL2_B"/>
    <property type="match status" value="1"/>
</dbReference>
<dbReference type="InterPro" id="IPR012340">
    <property type="entry name" value="NA-bd_OB-fold"/>
</dbReference>
<dbReference type="InterPro" id="IPR014722">
    <property type="entry name" value="Rib_uL2_dom2"/>
</dbReference>
<dbReference type="InterPro" id="IPR002171">
    <property type="entry name" value="Ribosomal_uL2"/>
</dbReference>
<dbReference type="InterPro" id="IPR005880">
    <property type="entry name" value="Ribosomal_uL2_bac/org-type"/>
</dbReference>
<dbReference type="InterPro" id="IPR022669">
    <property type="entry name" value="Ribosomal_uL2_C"/>
</dbReference>
<dbReference type="InterPro" id="IPR022671">
    <property type="entry name" value="Ribosomal_uL2_CS"/>
</dbReference>
<dbReference type="InterPro" id="IPR014726">
    <property type="entry name" value="Ribosomal_uL2_dom3"/>
</dbReference>
<dbReference type="InterPro" id="IPR022666">
    <property type="entry name" value="Ribosomal_uL2_RNA-bd_dom"/>
</dbReference>
<dbReference type="InterPro" id="IPR008991">
    <property type="entry name" value="Translation_prot_SH3-like_sf"/>
</dbReference>
<dbReference type="NCBIfam" id="TIGR01171">
    <property type="entry name" value="rplB_bact"/>
    <property type="match status" value="1"/>
</dbReference>
<dbReference type="PANTHER" id="PTHR13691:SF5">
    <property type="entry name" value="LARGE RIBOSOMAL SUBUNIT PROTEIN UL2M"/>
    <property type="match status" value="1"/>
</dbReference>
<dbReference type="PANTHER" id="PTHR13691">
    <property type="entry name" value="RIBOSOMAL PROTEIN L2"/>
    <property type="match status" value="1"/>
</dbReference>
<dbReference type="Pfam" id="PF00181">
    <property type="entry name" value="Ribosomal_L2"/>
    <property type="match status" value="1"/>
</dbReference>
<dbReference type="Pfam" id="PF03947">
    <property type="entry name" value="Ribosomal_L2_C"/>
    <property type="match status" value="1"/>
</dbReference>
<dbReference type="PIRSF" id="PIRSF002158">
    <property type="entry name" value="Ribosomal_L2"/>
    <property type="match status" value="1"/>
</dbReference>
<dbReference type="SMART" id="SM01383">
    <property type="entry name" value="Ribosomal_L2"/>
    <property type="match status" value="1"/>
</dbReference>
<dbReference type="SMART" id="SM01382">
    <property type="entry name" value="Ribosomal_L2_C"/>
    <property type="match status" value="1"/>
</dbReference>
<dbReference type="SUPFAM" id="SSF50249">
    <property type="entry name" value="Nucleic acid-binding proteins"/>
    <property type="match status" value="1"/>
</dbReference>
<dbReference type="SUPFAM" id="SSF50104">
    <property type="entry name" value="Translation proteins SH3-like domain"/>
    <property type="match status" value="1"/>
</dbReference>
<dbReference type="PROSITE" id="PS00467">
    <property type="entry name" value="RIBOSOMAL_L2"/>
    <property type="match status" value="1"/>
</dbReference>
<evidence type="ECO:0000255" key="1">
    <source>
        <dbReference type="HAMAP-Rule" id="MF_01320"/>
    </source>
</evidence>
<evidence type="ECO:0000256" key="2">
    <source>
        <dbReference type="SAM" id="MobiDB-lite"/>
    </source>
</evidence>
<evidence type="ECO:0000305" key="3"/>
<name>RL2_SODGM</name>
<comment type="function">
    <text evidence="1">One of the primary rRNA binding proteins. Required for association of the 30S and 50S subunits to form the 70S ribosome, for tRNA binding and peptide bond formation. It has been suggested to have peptidyltransferase activity; this is somewhat controversial. Makes several contacts with the 16S rRNA in the 70S ribosome.</text>
</comment>
<comment type="subunit">
    <text evidence="1">Part of the 50S ribosomal subunit. Forms a bridge to the 30S subunit in the 70S ribosome.</text>
</comment>
<comment type="similarity">
    <text evidence="1">Belongs to the universal ribosomal protein uL2 family.</text>
</comment>
<proteinExistence type="inferred from homology"/>
<keyword id="KW-0687">Ribonucleoprotein</keyword>
<keyword id="KW-0689">Ribosomal protein</keyword>
<keyword id="KW-0694">RNA-binding</keyword>
<keyword id="KW-0699">rRNA-binding</keyword>
<gene>
    <name evidence="1" type="primary">rplB</name>
    <name type="ordered locus">SG2275</name>
</gene>
<feature type="chain" id="PRO_0000237244" description="Large ribosomal subunit protein uL2">
    <location>
        <begin position="1"/>
        <end position="273"/>
    </location>
</feature>
<feature type="region of interest" description="Disordered" evidence="2">
    <location>
        <begin position="221"/>
        <end position="273"/>
    </location>
</feature>
<sequence>MAIVKCKPTSPGRRHVVKVVNPELHKGKPYAPLLETLSKSGGRNNNGRITTRHIGGGHKQHYRLIDFKRNKDGIPAVVERLEYDPNRSANIALVLYKDGERRYILAPKGLKAGEQIQSGVDAAIKAGNALPMRNIPVGSTVHNVEMKPGKGGQLARSAGAYVQIVARDGAYVTLRLRSGEMRKIQSECRATLGEVGNAEHMLRVLGKAGASRWRGIRPTVRGTAMNPVDHPHGGGEGRNFGKHPVTPWGIQTKGKKTRSNKRTDKFIVRRRSK</sequence>
<organism>
    <name type="scientific">Sodalis glossinidius (strain morsitans)</name>
    <dbReference type="NCBI Taxonomy" id="343509"/>
    <lineage>
        <taxon>Bacteria</taxon>
        <taxon>Pseudomonadati</taxon>
        <taxon>Pseudomonadota</taxon>
        <taxon>Gammaproteobacteria</taxon>
        <taxon>Enterobacterales</taxon>
        <taxon>Bruguierivoracaceae</taxon>
        <taxon>Sodalis</taxon>
    </lineage>
</organism>